<gene>
    <name evidence="1" type="primary">tmk</name>
    <name type="ordered locus">PSEEN1624</name>
</gene>
<protein>
    <recommendedName>
        <fullName evidence="1">Thymidylate kinase</fullName>
        <ecNumber evidence="1">2.7.4.9</ecNumber>
    </recommendedName>
    <alternativeName>
        <fullName evidence="1">dTMP kinase</fullName>
    </alternativeName>
</protein>
<keyword id="KW-0067">ATP-binding</keyword>
<keyword id="KW-0418">Kinase</keyword>
<keyword id="KW-0545">Nucleotide biosynthesis</keyword>
<keyword id="KW-0547">Nucleotide-binding</keyword>
<keyword id="KW-0808">Transferase</keyword>
<name>KTHY_PSEE4</name>
<reference key="1">
    <citation type="journal article" date="2006" name="Nat. Biotechnol.">
        <title>Complete genome sequence of the entomopathogenic and metabolically versatile soil bacterium Pseudomonas entomophila.</title>
        <authorList>
            <person name="Vodovar N."/>
            <person name="Vallenet D."/>
            <person name="Cruveiller S."/>
            <person name="Rouy Z."/>
            <person name="Barbe V."/>
            <person name="Acosta C."/>
            <person name="Cattolico L."/>
            <person name="Jubin C."/>
            <person name="Lajus A."/>
            <person name="Segurens B."/>
            <person name="Vacherie B."/>
            <person name="Wincker P."/>
            <person name="Weissenbach J."/>
            <person name="Lemaitre B."/>
            <person name="Medigue C."/>
            <person name="Boccard F."/>
        </authorList>
    </citation>
    <scope>NUCLEOTIDE SEQUENCE [LARGE SCALE GENOMIC DNA]</scope>
    <source>
        <strain>L48</strain>
    </source>
</reference>
<accession>Q1ICY2</accession>
<evidence type="ECO:0000255" key="1">
    <source>
        <dbReference type="HAMAP-Rule" id="MF_00165"/>
    </source>
</evidence>
<comment type="function">
    <text evidence="1">Phosphorylation of dTMP to form dTDP in both de novo and salvage pathways of dTTP synthesis.</text>
</comment>
<comment type="catalytic activity">
    <reaction evidence="1">
        <text>dTMP + ATP = dTDP + ADP</text>
        <dbReference type="Rhea" id="RHEA:13517"/>
        <dbReference type="ChEBI" id="CHEBI:30616"/>
        <dbReference type="ChEBI" id="CHEBI:58369"/>
        <dbReference type="ChEBI" id="CHEBI:63528"/>
        <dbReference type="ChEBI" id="CHEBI:456216"/>
        <dbReference type="EC" id="2.7.4.9"/>
    </reaction>
</comment>
<comment type="similarity">
    <text evidence="1">Belongs to the thymidylate kinase family.</text>
</comment>
<dbReference type="EC" id="2.7.4.9" evidence="1"/>
<dbReference type="EMBL" id="CT573326">
    <property type="protein sequence ID" value="CAK14481.1"/>
    <property type="molecule type" value="Genomic_DNA"/>
</dbReference>
<dbReference type="RefSeq" id="WP_011532891.1">
    <property type="nucleotide sequence ID" value="NC_008027.1"/>
</dbReference>
<dbReference type="SMR" id="Q1ICY2"/>
<dbReference type="STRING" id="384676.PSEEN1624"/>
<dbReference type="GeneID" id="32804865"/>
<dbReference type="KEGG" id="pen:PSEEN1624"/>
<dbReference type="eggNOG" id="COG0125">
    <property type="taxonomic scope" value="Bacteria"/>
</dbReference>
<dbReference type="HOGENOM" id="CLU_049131_0_2_6"/>
<dbReference type="OrthoDB" id="9774907at2"/>
<dbReference type="Proteomes" id="UP000000658">
    <property type="component" value="Chromosome"/>
</dbReference>
<dbReference type="GO" id="GO:0005829">
    <property type="term" value="C:cytosol"/>
    <property type="evidence" value="ECO:0007669"/>
    <property type="project" value="TreeGrafter"/>
</dbReference>
<dbReference type="GO" id="GO:0005524">
    <property type="term" value="F:ATP binding"/>
    <property type="evidence" value="ECO:0007669"/>
    <property type="project" value="UniProtKB-UniRule"/>
</dbReference>
<dbReference type="GO" id="GO:0004798">
    <property type="term" value="F:dTMP kinase activity"/>
    <property type="evidence" value="ECO:0007669"/>
    <property type="project" value="UniProtKB-UniRule"/>
</dbReference>
<dbReference type="GO" id="GO:0006233">
    <property type="term" value="P:dTDP biosynthetic process"/>
    <property type="evidence" value="ECO:0007669"/>
    <property type="project" value="InterPro"/>
</dbReference>
<dbReference type="GO" id="GO:0006235">
    <property type="term" value="P:dTTP biosynthetic process"/>
    <property type="evidence" value="ECO:0007669"/>
    <property type="project" value="UniProtKB-UniRule"/>
</dbReference>
<dbReference type="GO" id="GO:0006227">
    <property type="term" value="P:dUDP biosynthetic process"/>
    <property type="evidence" value="ECO:0007669"/>
    <property type="project" value="TreeGrafter"/>
</dbReference>
<dbReference type="CDD" id="cd01672">
    <property type="entry name" value="TMPK"/>
    <property type="match status" value="1"/>
</dbReference>
<dbReference type="FunFam" id="3.40.50.300:FF:000225">
    <property type="entry name" value="Thymidylate kinase"/>
    <property type="match status" value="1"/>
</dbReference>
<dbReference type="Gene3D" id="3.40.50.300">
    <property type="entry name" value="P-loop containing nucleotide triphosphate hydrolases"/>
    <property type="match status" value="1"/>
</dbReference>
<dbReference type="HAMAP" id="MF_00165">
    <property type="entry name" value="Thymidylate_kinase"/>
    <property type="match status" value="1"/>
</dbReference>
<dbReference type="InterPro" id="IPR027417">
    <property type="entry name" value="P-loop_NTPase"/>
</dbReference>
<dbReference type="InterPro" id="IPR039430">
    <property type="entry name" value="Thymidylate_kin-like_dom"/>
</dbReference>
<dbReference type="InterPro" id="IPR018094">
    <property type="entry name" value="Thymidylate_kinase"/>
</dbReference>
<dbReference type="NCBIfam" id="TIGR00041">
    <property type="entry name" value="DTMP_kinase"/>
    <property type="match status" value="1"/>
</dbReference>
<dbReference type="PANTHER" id="PTHR10344">
    <property type="entry name" value="THYMIDYLATE KINASE"/>
    <property type="match status" value="1"/>
</dbReference>
<dbReference type="PANTHER" id="PTHR10344:SF4">
    <property type="entry name" value="UMP-CMP KINASE 2, MITOCHONDRIAL"/>
    <property type="match status" value="1"/>
</dbReference>
<dbReference type="Pfam" id="PF02223">
    <property type="entry name" value="Thymidylate_kin"/>
    <property type="match status" value="1"/>
</dbReference>
<dbReference type="SUPFAM" id="SSF52540">
    <property type="entry name" value="P-loop containing nucleoside triphosphate hydrolases"/>
    <property type="match status" value="1"/>
</dbReference>
<feature type="chain" id="PRO_1000023255" description="Thymidylate kinase">
    <location>
        <begin position="1"/>
        <end position="210"/>
    </location>
</feature>
<feature type="binding site" evidence="1">
    <location>
        <begin position="10"/>
        <end position="17"/>
    </location>
    <ligand>
        <name>ATP</name>
        <dbReference type="ChEBI" id="CHEBI:30616"/>
    </ligand>
</feature>
<sequence>MSGLFITLEGPEGAGKSTNREYLAARLREQGVDVVMTREPGGTPLAERIRELLLAPSEEAMAVDTELLLMFAARAQHLAQVIRPALARGAVVLCDRFTDATYAYQGGGRGLSVERIAILESFVQGELRPDLTLVFDLPVEVGLARAAARGRLDRFEQEGQAFFEAVRQAYLQRAGQQPQRYSLLDAAQPLAAVQRAIDALLPGILERCRG</sequence>
<organism>
    <name type="scientific">Pseudomonas entomophila (strain L48)</name>
    <dbReference type="NCBI Taxonomy" id="384676"/>
    <lineage>
        <taxon>Bacteria</taxon>
        <taxon>Pseudomonadati</taxon>
        <taxon>Pseudomonadota</taxon>
        <taxon>Gammaproteobacteria</taxon>
        <taxon>Pseudomonadales</taxon>
        <taxon>Pseudomonadaceae</taxon>
        <taxon>Pseudomonas</taxon>
    </lineage>
</organism>
<proteinExistence type="inferred from homology"/>